<organism>
    <name type="scientific">Staphylococcus aureus (strain USA300 / TCH1516)</name>
    <dbReference type="NCBI Taxonomy" id="451516"/>
    <lineage>
        <taxon>Bacteria</taxon>
        <taxon>Bacillati</taxon>
        <taxon>Bacillota</taxon>
        <taxon>Bacilli</taxon>
        <taxon>Bacillales</taxon>
        <taxon>Staphylococcaceae</taxon>
        <taxon>Staphylococcus</taxon>
    </lineage>
</organism>
<dbReference type="EMBL" id="CP000730">
    <property type="protein sequence ID" value="ABX30069.1"/>
    <property type="molecule type" value="Genomic_DNA"/>
</dbReference>
<dbReference type="RefSeq" id="WP_000402656.1">
    <property type="nucleotide sequence ID" value="NC_010079.1"/>
</dbReference>
<dbReference type="SMR" id="A8Z4Y0"/>
<dbReference type="KEGG" id="sax:USA300HOU_2072"/>
<dbReference type="HOGENOM" id="CLU_018614_3_0_9"/>
<dbReference type="GO" id="GO:0005886">
    <property type="term" value="C:plasma membrane"/>
    <property type="evidence" value="ECO:0007669"/>
    <property type="project" value="UniProtKB-SubCell"/>
</dbReference>
<dbReference type="GO" id="GO:0008556">
    <property type="term" value="F:P-type potassium transmembrane transporter activity"/>
    <property type="evidence" value="ECO:0007669"/>
    <property type="project" value="InterPro"/>
</dbReference>
<dbReference type="GO" id="GO:0030955">
    <property type="term" value="F:potassium ion binding"/>
    <property type="evidence" value="ECO:0007669"/>
    <property type="project" value="UniProtKB-UniRule"/>
</dbReference>
<dbReference type="HAMAP" id="MF_00275">
    <property type="entry name" value="KdpA"/>
    <property type="match status" value="1"/>
</dbReference>
<dbReference type="InterPro" id="IPR004623">
    <property type="entry name" value="KdpA"/>
</dbReference>
<dbReference type="NCBIfam" id="TIGR00680">
    <property type="entry name" value="kdpA"/>
    <property type="match status" value="1"/>
</dbReference>
<dbReference type="PANTHER" id="PTHR30607">
    <property type="entry name" value="POTASSIUM-TRANSPORTING ATPASE A CHAIN"/>
    <property type="match status" value="1"/>
</dbReference>
<dbReference type="PANTHER" id="PTHR30607:SF2">
    <property type="entry name" value="POTASSIUM-TRANSPORTING ATPASE POTASSIUM-BINDING SUBUNIT"/>
    <property type="match status" value="1"/>
</dbReference>
<dbReference type="Pfam" id="PF03814">
    <property type="entry name" value="KdpA"/>
    <property type="match status" value="1"/>
</dbReference>
<dbReference type="PIRSF" id="PIRSF001294">
    <property type="entry name" value="K_ATPaseA"/>
    <property type="match status" value="1"/>
</dbReference>
<keyword id="KW-1003">Cell membrane</keyword>
<keyword id="KW-0406">Ion transport</keyword>
<keyword id="KW-0472">Membrane</keyword>
<keyword id="KW-0630">Potassium</keyword>
<keyword id="KW-0633">Potassium transport</keyword>
<keyword id="KW-0812">Transmembrane</keyword>
<keyword id="KW-1133">Transmembrane helix</keyword>
<keyword id="KW-0813">Transport</keyword>
<feature type="chain" id="PRO_1000078790" description="Potassium-transporting ATPase potassium-binding subunit">
    <location>
        <begin position="1"/>
        <end position="558"/>
    </location>
</feature>
<feature type="transmembrane region" description="Helical" evidence="1">
    <location>
        <begin position="1"/>
        <end position="21"/>
    </location>
</feature>
<feature type="transmembrane region" description="Helical" evidence="1">
    <location>
        <begin position="66"/>
        <end position="86"/>
    </location>
</feature>
<feature type="transmembrane region" description="Helical" evidence="1">
    <location>
        <begin position="127"/>
        <end position="147"/>
    </location>
</feature>
<feature type="transmembrane region" description="Helical" evidence="1">
    <location>
        <begin position="166"/>
        <end position="186"/>
    </location>
</feature>
<feature type="transmembrane region" description="Helical" evidence="1">
    <location>
        <begin position="245"/>
        <end position="265"/>
    </location>
</feature>
<feature type="transmembrane region" description="Helical" evidence="1">
    <location>
        <begin position="281"/>
        <end position="301"/>
    </location>
</feature>
<feature type="transmembrane region" description="Helical" evidence="1">
    <location>
        <begin position="327"/>
        <end position="347"/>
    </location>
</feature>
<feature type="transmembrane region" description="Helical" evidence="1">
    <location>
        <begin position="354"/>
        <end position="374"/>
    </location>
</feature>
<feature type="transmembrane region" description="Helical" evidence="1">
    <location>
        <begin position="377"/>
        <end position="397"/>
    </location>
</feature>
<feature type="transmembrane region" description="Helical" evidence="1">
    <location>
        <begin position="416"/>
        <end position="436"/>
    </location>
</feature>
<feature type="transmembrane region" description="Helical" evidence="1">
    <location>
        <begin position="482"/>
        <end position="502"/>
    </location>
</feature>
<feature type="transmembrane region" description="Helical" evidence="1">
    <location>
        <begin position="531"/>
        <end position="551"/>
    </location>
</feature>
<comment type="function">
    <text evidence="1">Part of the high-affinity ATP-driven potassium transport (or Kdp) system, which catalyzes the hydrolysis of ATP coupled with the electrogenic transport of potassium into the cytoplasm. This subunit binds the extracellular potassium ions and delivers the ions to the membrane domain of KdpB through an intramembrane tunnel.</text>
</comment>
<comment type="subunit">
    <text evidence="1">The system is composed of three essential subunits: KdpA, KdpB and KdpC.</text>
</comment>
<comment type="subcellular location">
    <subcellularLocation>
        <location evidence="1">Cell membrane</location>
        <topology evidence="1">Multi-pass membrane protein</topology>
    </subcellularLocation>
</comment>
<comment type="similarity">
    <text evidence="1">Belongs to the KdpA family.</text>
</comment>
<gene>
    <name evidence="1" type="primary">kdpA</name>
    <name type="ordered locus">USA300HOU_2072</name>
</gene>
<reference key="1">
    <citation type="journal article" date="2007" name="BMC Microbiol.">
        <title>Subtle genetic changes enhance virulence of methicillin resistant and sensitive Staphylococcus aureus.</title>
        <authorList>
            <person name="Highlander S.K."/>
            <person name="Hulten K.G."/>
            <person name="Qin X."/>
            <person name="Jiang H."/>
            <person name="Yerrapragada S."/>
            <person name="Mason E.O. Jr."/>
            <person name="Shang Y."/>
            <person name="Williams T.M."/>
            <person name="Fortunov R.M."/>
            <person name="Liu Y."/>
            <person name="Igboeli O."/>
            <person name="Petrosino J."/>
            <person name="Tirumalai M."/>
            <person name="Uzman A."/>
            <person name="Fox G.E."/>
            <person name="Cardenas A.M."/>
            <person name="Muzny D.M."/>
            <person name="Hemphill L."/>
            <person name="Ding Y."/>
            <person name="Dugan S."/>
            <person name="Blyth P.R."/>
            <person name="Buhay C.J."/>
            <person name="Dinh H.H."/>
            <person name="Hawes A.C."/>
            <person name="Holder M."/>
            <person name="Kovar C.L."/>
            <person name="Lee S.L."/>
            <person name="Liu W."/>
            <person name="Nazareth L.V."/>
            <person name="Wang Q."/>
            <person name="Zhou J."/>
            <person name="Kaplan S.L."/>
            <person name="Weinstock G.M."/>
        </authorList>
    </citation>
    <scope>NUCLEOTIDE SEQUENCE [LARGE SCALE GENOMIC DNA]</scope>
    <source>
        <strain>USA300 / TCH1516</strain>
    </source>
</reference>
<name>KDPA_STAAT</name>
<proteinExistence type="inferred from homology"/>
<accession>A8Z4Y0</accession>
<sequence length="558" mass="62026">MEIILFLTMMVMITYVFSGYLYRVALVQSSRVDLIFTRFENMCFKIIGTDLEHMSAKTYVKHFLAFNGFMGFITFVLLIVQQWLFLNPNHNLNQSIDLAFNTAISFLTNSNLQHYNGESDVTYLTQMIVMTYLMFTSSASGYAVCIAMLRRLTGLTNIIGNFYQDIVRFIVRVLLPLSCLISILLMTQGVPQTLHANLMIRTLSGHIQHIAFGPIASLESIKHLGTNGGGFLAGNSATPFENPNIWSNFIEMGSMMLLPMSMLFLFGRMLSRHGKRVHRHALILFVAMFFIFIAILTLTMWSEYRGNPILANLGIYGPNMEGKEVRFGAGLSALFTVITTAFTTGSVNNMHDSLTPIGGLGPMVLMMLNVVFGGEGVGLMNLLIFVLLTVFICSLMVGKTPEYLNMPIGAREMKCIVLVFLIHPILILVFSALAFMIPGASESITNPSFHGISQVMYEMTSAAANNGSGFEGLKDDTTFWNISTGIIMLLSRYIPIILQLMIASSLVNKKSYHQDKYTIAIDKPYFGVSLIVFIVLLSGLTFIPVLLLGPIGEFLTLK</sequence>
<evidence type="ECO:0000255" key="1">
    <source>
        <dbReference type="HAMAP-Rule" id="MF_00275"/>
    </source>
</evidence>
<protein>
    <recommendedName>
        <fullName evidence="1">Potassium-transporting ATPase potassium-binding subunit</fullName>
    </recommendedName>
    <alternativeName>
        <fullName evidence="1">ATP phosphohydrolase [potassium-transporting] A chain</fullName>
    </alternativeName>
    <alternativeName>
        <fullName evidence="1">Potassium-binding and translocating subunit A</fullName>
    </alternativeName>
    <alternativeName>
        <fullName evidence="1">Potassium-translocating ATPase A chain</fullName>
    </alternativeName>
</protein>